<reference key="1">
    <citation type="journal article" date="2009" name="J. Bacteriol.">
        <title>Genomic sequencing reveals regulatory mutations and recombinational events in the widely used MC4100 lineage of Escherichia coli K-12.</title>
        <authorList>
            <person name="Ferenci T."/>
            <person name="Zhou Z."/>
            <person name="Betteridge T."/>
            <person name="Ren Y."/>
            <person name="Liu Y."/>
            <person name="Feng L."/>
            <person name="Reeves P.R."/>
            <person name="Wang L."/>
        </authorList>
    </citation>
    <scope>NUCLEOTIDE SEQUENCE [LARGE SCALE GENOMIC DNA]</scope>
    <source>
        <strain>K12 / MC4100 / BW2952</strain>
    </source>
</reference>
<dbReference type="EC" id="4.3.1.18" evidence="1"/>
<dbReference type="EMBL" id="CP001396">
    <property type="protein sequence ID" value="ACR63006.1"/>
    <property type="molecule type" value="Genomic_DNA"/>
</dbReference>
<dbReference type="RefSeq" id="WP_000426427.1">
    <property type="nucleotide sequence ID" value="NC_012759.1"/>
</dbReference>
<dbReference type="SMR" id="C4ZVQ3"/>
<dbReference type="KEGG" id="ebw:BWG_2134"/>
<dbReference type="HOGENOM" id="CLU_035707_0_0_6"/>
<dbReference type="GO" id="GO:0008721">
    <property type="term" value="F:D-serine ammonia-lyase activity"/>
    <property type="evidence" value="ECO:0007669"/>
    <property type="project" value="UniProtKB-EC"/>
</dbReference>
<dbReference type="GO" id="GO:0016836">
    <property type="term" value="F:hydro-lyase activity"/>
    <property type="evidence" value="ECO:0007669"/>
    <property type="project" value="UniProtKB-UniRule"/>
</dbReference>
<dbReference type="GO" id="GO:0030170">
    <property type="term" value="F:pyridoxal phosphate binding"/>
    <property type="evidence" value="ECO:0007669"/>
    <property type="project" value="InterPro"/>
</dbReference>
<dbReference type="GO" id="GO:0036088">
    <property type="term" value="P:D-serine catabolic process"/>
    <property type="evidence" value="ECO:0007669"/>
    <property type="project" value="TreeGrafter"/>
</dbReference>
<dbReference type="GO" id="GO:0009097">
    <property type="term" value="P:isoleucine biosynthetic process"/>
    <property type="evidence" value="ECO:0007669"/>
    <property type="project" value="TreeGrafter"/>
</dbReference>
<dbReference type="CDD" id="cd06447">
    <property type="entry name" value="D-Ser-dehyd"/>
    <property type="match status" value="1"/>
</dbReference>
<dbReference type="FunFam" id="3.40.50.1100:FF:000018">
    <property type="entry name" value="D-serine dehydratase"/>
    <property type="match status" value="1"/>
</dbReference>
<dbReference type="Gene3D" id="3.40.50.1100">
    <property type="match status" value="2"/>
</dbReference>
<dbReference type="HAMAP" id="MF_01030">
    <property type="entry name" value="D_Ser_dehydrat"/>
    <property type="match status" value="1"/>
</dbReference>
<dbReference type="InterPro" id="IPR011780">
    <property type="entry name" value="D_Ser_am_lyase"/>
</dbReference>
<dbReference type="InterPro" id="IPR050147">
    <property type="entry name" value="Ser/Thr_Dehydratase"/>
</dbReference>
<dbReference type="InterPro" id="IPR000634">
    <property type="entry name" value="Ser/Thr_deHydtase_PyrdxlP-BS"/>
</dbReference>
<dbReference type="InterPro" id="IPR001926">
    <property type="entry name" value="TrpB-like_PALP"/>
</dbReference>
<dbReference type="InterPro" id="IPR036052">
    <property type="entry name" value="TrpB-like_PALP_sf"/>
</dbReference>
<dbReference type="NCBIfam" id="TIGR02035">
    <property type="entry name" value="D_Ser_am_lyase"/>
    <property type="match status" value="1"/>
</dbReference>
<dbReference type="NCBIfam" id="NF002823">
    <property type="entry name" value="PRK02991.1"/>
    <property type="match status" value="1"/>
</dbReference>
<dbReference type="PANTHER" id="PTHR48078:SF9">
    <property type="entry name" value="D-SERINE DEHYDRATASE"/>
    <property type="match status" value="1"/>
</dbReference>
<dbReference type="PANTHER" id="PTHR48078">
    <property type="entry name" value="THREONINE DEHYDRATASE, MITOCHONDRIAL-RELATED"/>
    <property type="match status" value="1"/>
</dbReference>
<dbReference type="Pfam" id="PF00291">
    <property type="entry name" value="PALP"/>
    <property type="match status" value="1"/>
</dbReference>
<dbReference type="SUPFAM" id="SSF53686">
    <property type="entry name" value="Tryptophan synthase beta subunit-like PLP-dependent enzymes"/>
    <property type="match status" value="1"/>
</dbReference>
<dbReference type="PROSITE" id="PS00165">
    <property type="entry name" value="DEHYDRATASE_SER_THR"/>
    <property type="match status" value="1"/>
</dbReference>
<evidence type="ECO:0000255" key="1">
    <source>
        <dbReference type="HAMAP-Rule" id="MF_01030"/>
    </source>
</evidence>
<comment type="catalytic activity">
    <reaction evidence="1">
        <text>D-serine = pyruvate + NH4(+)</text>
        <dbReference type="Rhea" id="RHEA:13977"/>
        <dbReference type="ChEBI" id="CHEBI:15361"/>
        <dbReference type="ChEBI" id="CHEBI:28938"/>
        <dbReference type="ChEBI" id="CHEBI:35247"/>
        <dbReference type="EC" id="4.3.1.18"/>
    </reaction>
</comment>
<comment type="cofactor">
    <cofactor evidence="1">
        <name>pyridoxal 5'-phosphate</name>
        <dbReference type="ChEBI" id="CHEBI:597326"/>
    </cofactor>
</comment>
<comment type="subunit">
    <text evidence="1">Monomer.</text>
</comment>
<comment type="similarity">
    <text evidence="1">Belongs to the serine/threonine dehydratase family. DsdA subfamily.</text>
</comment>
<accession>C4ZVQ3</accession>
<proteinExistence type="inferred from homology"/>
<sequence length="442" mass="47901">MENAKMNSLIAQYPLVKDLVALKETTWFNPGTTSLAEGLPYVGLTEQDVQDAHARLSRFAPYLAKAFPETAATGGIIESELVAIPAMQKRLEKEYQQPISGQLLLKKDSHLPISGSIKARGGIYEVLAHAEKLALEAGLLTLDDDYSKLLSPEFKQFFSQYSIAVGSTGNLGLSIGIMSARIGFKVTVHMSADARAWKKAKLRSHGVTVVEYEQDYGVAVEEGRKAAQSDPNCFFIDDENSRTLFLGYSVAGQRLKAQFAQQGRIVDADNPLFVYLPCGVGGGPGGVAFGLKLAFGDHVHCFFAEPTHSPCMLLGVHTGLHDQISVQDIGIDNLTAADGLAVGRASGFVGRAMERLLDGFYTLSDQTMYDMLGWLAQEEGIRLEPSALAGMAGPQRVCASVSYQQMHGFSAEQLRNTTHLVWATGGGMVPEEEMNQYLAKGR</sequence>
<gene>
    <name evidence="1" type="primary">dsdA</name>
    <name type="ordered locus">BWG_2134</name>
</gene>
<name>SDHD_ECOBW</name>
<protein>
    <recommendedName>
        <fullName evidence="1">D-serine dehydratase</fullName>
        <ecNumber evidence="1">4.3.1.18</ecNumber>
    </recommendedName>
    <alternativeName>
        <fullName evidence="1">D-serine deaminase</fullName>
        <shortName evidence="1">DSD</shortName>
    </alternativeName>
</protein>
<feature type="chain" id="PRO_1000213345" description="D-serine dehydratase">
    <location>
        <begin position="1"/>
        <end position="442"/>
    </location>
</feature>
<feature type="modified residue" description="N6-(pyridoxal phosphate)lysine" evidence="1">
    <location>
        <position position="118"/>
    </location>
</feature>
<organism>
    <name type="scientific">Escherichia coli (strain K12 / MC4100 / BW2952)</name>
    <dbReference type="NCBI Taxonomy" id="595496"/>
    <lineage>
        <taxon>Bacteria</taxon>
        <taxon>Pseudomonadati</taxon>
        <taxon>Pseudomonadota</taxon>
        <taxon>Gammaproteobacteria</taxon>
        <taxon>Enterobacterales</taxon>
        <taxon>Enterobacteriaceae</taxon>
        <taxon>Escherichia</taxon>
    </lineage>
</organism>
<keyword id="KW-0456">Lyase</keyword>
<keyword id="KW-0663">Pyridoxal phosphate</keyword>